<proteinExistence type="inferred from homology"/>
<organism>
    <name type="scientific">Bacillus cereus (strain AH820)</name>
    <dbReference type="NCBI Taxonomy" id="405535"/>
    <lineage>
        <taxon>Bacteria</taxon>
        <taxon>Bacillati</taxon>
        <taxon>Bacillota</taxon>
        <taxon>Bacilli</taxon>
        <taxon>Bacillales</taxon>
        <taxon>Bacillaceae</taxon>
        <taxon>Bacillus</taxon>
        <taxon>Bacillus cereus group</taxon>
    </lineage>
</organism>
<evidence type="ECO:0000255" key="1">
    <source>
        <dbReference type="HAMAP-Rule" id="MF_01217"/>
    </source>
</evidence>
<evidence type="ECO:0000255" key="2">
    <source>
        <dbReference type="PROSITE-ProRule" id="PRU00258"/>
    </source>
</evidence>
<comment type="function">
    <text evidence="1">Carrier of the growing fatty acid chain in fatty acid biosynthesis.</text>
</comment>
<comment type="pathway">
    <text evidence="1">Lipid metabolism; fatty acid biosynthesis.</text>
</comment>
<comment type="subcellular location">
    <subcellularLocation>
        <location evidence="1">Cytoplasm</location>
    </subcellularLocation>
</comment>
<comment type="PTM">
    <text evidence="1">4'-phosphopantetheine is transferred from CoA to a specific serine of apo-ACP by AcpS. This modification is essential for activity because fatty acids are bound in thioester linkage to the sulfhydryl of the prosthetic group.</text>
</comment>
<comment type="similarity">
    <text evidence="1">Belongs to the acyl carrier protein (ACP) family.</text>
</comment>
<name>ACP_BACC0</name>
<gene>
    <name evidence="1" type="primary">acpP</name>
    <name type="ordered locus">BCAH820_3864</name>
</gene>
<dbReference type="EMBL" id="CP001283">
    <property type="protein sequence ID" value="ACK87249.1"/>
    <property type="molecule type" value="Genomic_DNA"/>
</dbReference>
<dbReference type="RefSeq" id="WP_000786062.1">
    <property type="nucleotide sequence ID" value="NC_011773.1"/>
</dbReference>
<dbReference type="SMR" id="B7JJT7"/>
<dbReference type="GeneID" id="93007262"/>
<dbReference type="KEGG" id="bcu:BCAH820_3864"/>
<dbReference type="HOGENOM" id="CLU_108696_5_3_9"/>
<dbReference type="UniPathway" id="UPA00094"/>
<dbReference type="Proteomes" id="UP000001363">
    <property type="component" value="Chromosome"/>
</dbReference>
<dbReference type="GO" id="GO:0005829">
    <property type="term" value="C:cytosol"/>
    <property type="evidence" value="ECO:0007669"/>
    <property type="project" value="TreeGrafter"/>
</dbReference>
<dbReference type="GO" id="GO:0016020">
    <property type="term" value="C:membrane"/>
    <property type="evidence" value="ECO:0007669"/>
    <property type="project" value="GOC"/>
</dbReference>
<dbReference type="GO" id="GO:0000035">
    <property type="term" value="F:acyl binding"/>
    <property type="evidence" value="ECO:0007669"/>
    <property type="project" value="TreeGrafter"/>
</dbReference>
<dbReference type="GO" id="GO:0000036">
    <property type="term" value="F:acyl carrier activity"/>
    <property type="evidence" value="ECO:0007669"/>
    <property type="project" value="UniProtKB-UniRule"/>
</dbReference>
<dbReference type="GO" id="GO:0009245">
    <property type="term" value="P:lipid A biosynthetic process"/>
    <property type="evidence" value="ECO:0007669"/>
    <property type="project" value="TreeGrafter"/>
</dbReference>
<dbReference type="FunFam" id="1.10.1200.10:FF:000001">
    <property type="entry name" value="Acyl carrier protein"/>
    <property type="match status" value="1"/>
</dbReference>
<dbReference type="Gene3D" id="1.10.1200.10">
    <property type="entry name" value="ACP-like"/>
    <property type="match status" value="1"/>
</dbReference>
<dbReference type="HAMAP" id="MF_01217">
    <property type="entry name" value="Acyl_carrier"/>
    <property type="match status" value="1"/>
</dbReference>
<dbReference type="InterPro" id="IPR003231">
    <property type="entry name" value="ACP"/>
</dbReference>
<dbReference type="InterPro" id="IPR036736">
    <property type="entry name" value="ACP-like_sf"/>
</dbReference>
<dbReference type="InterPro" id="IPR009081">
    <property type="entry name" value="PP-bd_ACP"/>
</dbReference>
<dbReference type="InterPro" id="IPR006162">
    <property type="entry name" value="Ppantetheine_attach_site"/>
</dbReference>
<dbReference type="NCBIfam" id="TIGR00517">
    <property type="entry name" value="acyl_carrier"/>
    <property type="match status" value="1"/>
</dbReference>
<dbReference type="NCBIfam" id="NF002148">
    <property type="entry name" value="PRK00982.1-2"/>
    <property type="match status" value="1"/>
</dbReference>
<dbReference type="NCBIfam" id="NF002149">
    <property type="entry name" value="PRK00982.1-3"/>
    <property type="match status" value="1"/>
</dbReference>
<dbReference type="NCBIfam" id="NF002150">
    <property type="entry name" value="PRK00982.1-4"/>
    <property type="match status" value="1"/>
</dbReference>
<dbReference type="NCBIfam" id="NF002151">
    <property type="entry name" value="PRK00982.1-5"/>
    <property type="match status" value="1"/>
</dbReference>
<dbReference type="PANTHER" id="PTHR20863">
    <property type="entry name" value="ACYL CARRIER PROTEIN"/>
    <property type="match status" value="1"/>
</dbReference>
<dbReference type="PANTHER" id="PTHR20863:SF76">
    <property type="entry name" value="CARRIER DOMAIN-CONTAINING PROTEIN"/>
    <property type="match status" value="1"/>
</dbReference>
<dbReference type="Pfam" id="PF00550">
    <property type="entry name" value="PP-binding"/>
    <property type="match status" value="1"/>
</dbReference>
<dbReference type="SUPFAM" id="SSF47336">
    <property type="entry name" value="ACP-like"/>
    <property type="match status" value="1"/>
</dbReference>
<dbReference type="PROSITE" id="PS50075">
    <property type="entry name" value="CARRIER"/>
    <property type="match status" value="1"/>
</dbReference>
<dbReference type="PROSITE" id="PS00012">
    <property type="entry name" value="PHOSPHOPANTETHEINE"/>
    <property type="match status" value="1"/>
</dbReference>
<sequence>MADVLERVTKIIVDRLGVEETEVVPAASFKEDLGADSLDVVELVMQLEDEFEMEISDEDAEKIATVGDAVTYIESHL</sequence>
<keyword id="KW-0963">Cytoplasm</keyword>
<keyword id="KW-0275">Fatty acid biosynthesis</keyword>
<keyword id="KW-0276">Fatty acid metabolism</keyword>
<keyword id="KW-0444">Lipid biosynthesis</keyword>
<keyword id="KW-0443">Lipid metabolism</keyword>
<keyword id="KW-0596">Phosphopantetheine</keyword>
<keyword id="KW-0597">Phosphoprotein</keyword>
<reference key="1">
    <citation type="submission" date="2008-10" db="EMBL/GenBank/DDBJ databases">
        <title>Genome sequence of Bacillus cereus AH820.</title>
        <authorList>
            <person name="Dodson R.J."/>
            <person name="Durkin A.S."/>
            <person name="Rosovitz M.J."/>
            <person name="Rasko D.A."/>
            <person name="Hoffmaster A."/>
            <person name="Ravel J."/>
            <person name="Sutton G."/>
        </authorList>
    </citation>
    <scope>NUCLEOTIDE SEQUENCE [LARGE SCALE GENOMIC DNA]</scope>
    <source>
        <strain>AH820</strain>
    </source>
</reference>
<accession>B7JJT7</accession>
<feature type="chain" id="PRO_1000138998" description="Acyl carrier protein">
    <location>
        <begin position="1"/>
        <end position="77"/>
    </location>
</feature>
<feature type="domain" description="Carrier" evidence="2">
    <location>
        <begin position="2"/>
        <end position="77"/>
    </location>
</feature>
<feature type="modified residue" description="O-(pantetheine 4'-phosphoryl)serine" evidence="2">
    <location>
        <position position="37"/>
    </location>
</feature>
<protein>
    <recommendedName>
        <fullName evidence="1">Acyl carrier protein</fullName>
        <shortName evidence="1">ACP</shortName>
    </recommendedName>
</protein>